<name>RPP29_MOUSE</name>
<keyword id="KW-0539">Nucleus</keyword>
<keyword id="KW-0597">Phosphoprotein</keyword>
<keyword id="KW-1185">Reference proteome</keyword>
<keyword id="KW-0819">tRNA processing</keyword>
<evidence type="ECO:0000250" key="1">
    <source>
        <dbReference type="UniProtKB" id="O95707"/>
    </source>
</evidence>
<evidence type="ECO:0000305" key="2"/>
<proteinExistence type="evidence at transcript level"/>
<reference key="1">
    <citation type="journal article" date="2005" name="Science">
        <title>The transcriptional landscape of the mammalian genome.</title>
        <authorList>
            <person name="Carninci P."/>
            <person name="Kasukawa T."/>
            <person name="Katayama S."/>
            <person name="Gough J."/>
            <person name="Frith M.C."/>
            <person name="Maeda N."/>
            <person name="Oyama R."/>
            <person name="Ravasi T."/>
            <person name="Lenhard B."/>
            <person name="Wells C."/>
            <person name="Kodzius R."/>
            <person name="Shimokawa K."/>
            <person name="Bajic V.B."/>
            <person name="Brenner S.E."/>
            <person name="Batalov S."/>
            <person name="Forrest A.R."/>
            <person name="Zavolan M."/>
            <person name="Davis M.J."/>
            <person name="Wilming L.G."/>
            <person name="Aidinis V."/>
            <person name="Allen J.E."/>
            <person name="Ambesi-Impiombato A."/>
            <person name="Apweiler R."/>
            <person name="Aturaliya R.N."/>
            <person name="Bailey T.L."/>
            <person name="Bansal M."/>
            <person name="Baxter L."/>
            <person name="Beisel K.W."/>
            <person name="Bersano T."/>
            <person name="Bono H."/>
            <person name="Chalk A.M."/>
            <person name="Chiu K.P."/>
            <person name="Choudhary V."/>
            <person name="Christoffels A."/>
            <person name="Clutterbuck D.R."/>
            <person name="Crowe M.L."/>
            <person name="Dalla E."/>
            <person name="Dalrymple B.P."/>
            <person name="de Bono B."/>
            <person name="Della Gatta G."/>
            <person name="di Bernardo D."/>
            <person name="Down T."/>
            <person name="Engstrom P."/>
            <person name="Fagiolini M."/>
            <person name="Faulkner G."/>
            <person name="Fletcher C.F."/>
            <person name="Fukushima T."/>
            <person name="Furuno M."/>
            <person name="Futaki S."/>
            <person name="Gariboldi M."/>
            <person name="Georgii-Hemming P."/>
            <person name="Gingeras T.R."/>
            <person name="Gojobori T."/>
            <person name="Green R.E."/>
            <person name="Gustincich S."/>
            <person name="Harbers M."/>
            <person name="Hayashi Y."/>
            <person name="Hensch T.K."/>
            <person name="Hirokawa N."/>
            <person name="Hill D."/>
            <person name="Huminiecki L."/>
            <person name="Iacono M."/>
            <person name="Ikeo K."/>
            <person name="Iwama A."/>
            <person name="Ishikawa T."/>
            <person name="Jakt M."/>
            <person name="Kanapin A."/>
            <person name="Katoh M."/>
            <person name="Kawasawa Y."/>
            <person name="Kelso J."/>
            <person name="Kitamura H."/>
            <person name="Kitano H."/>
            <person name="Kollias G."/>
            <person name="Krishnan S.P."/>
            <person name="Kruger A."/>
            <person name="Kummerfeld S.K."/>
            <person name="Kurochkin I.V."/>
            <person name="Lareau L.F."/>
            <person name="Lazarevic D."/>
            <person name="Lipovich L."/>
            <person name="Liu J."/>
            <person name="Liuni S."/>
            <person name="McWilliam S."/>
            <person name="Madan Babu M."/>
            <person name="Madera M."/>
            <person name="Marchionni L."/>
            <person name="Matsuda H."/>
            <person name="Matsuzawa S."/>
            <person name="Miki H."/>
            <person name="Mignone F."/>
            <person name="Miyake S."/>
            <person name="Morris K."/>
            <person name="Mottagui-Tabar S."/>
            <person name="Mulder N."/>
            <person name="Nakano N."/>
            <person name="Nakauchi H."/>
            <person name="Ng P."/>
            <person name="Nilsson R."/>
            <person name="Nishiguchi S."/>
            <person name="Nishikawa S."/>
            <person name="Nori F."/>
            <person name="Ohara O."/>
            <person name="Okazaki Y."/>
            <person name="Orlando V."/>
            <person name="Pang K.C."/>
            <person name="Pavan W.J."/>
            <person name="Pavesi G."/>
            <person name="Pesole G."/>
            <person name="Petrovsky N."/>
            <person name="Piazza S."/>
            <person name="Reed J."/>
            <person name="Reid J.F."/>
            <person name="Ring B.Z."/>
            <person name="Ringwald M."/>
            <person name="Rost B."/>
            <person name="Ruan Y."/>
            <person name="Salzberg S.L."/>
            <person name="Sandelin A."/>
            <person name="Schneider C."/>
            <person name="Schoenbach C."/>
            <person name="Sekiguchi K."/>
            <person name="Semple C.A."/>
            <person name="Seno S."/>
            <person name="Sessa L."/>
            <person name="Sheng Y."/>
            <person name="Shibata Y."/>
            <person name="Shimada H."/>
            <person name="Shimada K."/>
            <person name="Silva D."/>
            <person name="Sinclair B."/>
            <person name="Sperling S."/>
            <person name="Stupka E."/>
            <person name="Sugiura K."/>
            <person name="Sultana R."/>
            <person name="Takenaka Y."/>
            <person name="Taki K."/>
            <person name="Tammoja K."/>
            <person name="Tan S.L."/>
            <person name="Tang S."/>
            <person name="Taylor M.S."/>
            <person name="Tegner J."/>
            <person name="Teichmann S.A."/>
            <person name="Ueda H.R."/>
            <person name="van Nimwegen E."/>
            <person name="Verardo R."/>
            <person name="Wei C.L."/>
            <person name="Yagi K."/>
            <person name="Yamanishi H."/>
            <person name="Zabarovsky E."/>
            <person name="Zhu S."/>
            <person name="Zimmer A."/>
            <person name="Hide W."/>
            <person name="Bult C."/>
            <person name="Grimmond S.M."/>
            <person name="Teasdale R.D."/>
            <person name="Liu E.T."/>
            <person name="Brusic V."/>
            <person name="Quackenbush J."/>
            <person name="Wahlestedt C."/>
            <person name="Mattick J.S."/>
            <person name="Hume D.A."/>
            <person name="Kai C."/>
            <person name="Sasaki D."/>
            <person name="Tomaru Y."/>
            <person name="Fukuda S."/>
            <person name="Kanamori-Katayama M."/>
            <person name="Suzuki M."/>
            <person name="Aoki J."/>
            <person name="Arakawa T."/>
            <person name="Iida J."/>
            <person name="Imamura K."/>
            <person name="Itoh M."/>
            <person name="Kato T."/>
            <person name="Kawaji H."/>
            <person name="Kawagashira N."/>
            <person name="Kawashima T."/>
            <person name="Kojima M."/>
            <person name="Kondo S."/>
            <person name="Konno H."/>
            <person name="Nakano K."/>
            <person name="Ninomiya N."/>
            <person name="Nishio T."/>
            <person name="Okada M."/>
            <person name="Plessy C."/>
            <person name="Shibata K."/>
            <person name="Shiraki T."/>
            <person name="Suzuki S."/>
            <person name="Tagami M."/>
            <person name="Waki K."/>
            <person name="Watahiki A."/>
            <person name="Okamura-Oho Y."/>
            <person name="Suzuki H."/>
            <person name="Kawai J."/>
            <person name="Hayashizaki Y."/>
        </authorList>
    </citation>
    <scope>NUCLEOTIDE SEQUENCE [LARGE SCALE MRNA]</scope>
    <source>
        <strain>C57BL/6J</strain>
        <tissue>Bone marrow</tissue>
        <tissue>Kidney</tissue>
    </source>
</reference>
<reference key="2">
    <citation type="journal article" date="2004" name="Genome Res.">
        <title>The status, quality, and expansion of the NIH full-length cDNA project: the Mammalian Gene Collection (MGC).</title>
        <authorList>
            <consortium name="The MGC Project Team"/>
        </authorList>
    </citation>
    <scope>NUCLEOTIDE SEQUENCE [LARGE SCALE MRNA]</scope>
    <source>
        <strain>FVB/N</strain>
        <tissue>Mammary tumor</tissue>
    </source>
</reference>
<comment type="function">
    <text evidence="1">Component of ribonuclease P, a ribonucleoprotein complex that generates mature tRNA molecules by cleaving their 5'-ends.</text>
</comment>
<comment type="subunit">
    <text evidence="1">Component of nuclear RNase P and RNase MRP ribonucleoproteins. RNase P consists of a catalytic RNA moiety and 10 different protein chains; POP1, POP4, POP5, POP7, RPP14, RPP21, RPP25, RPP30, RPP38 and RPP40. Within the RNase P complex, POP1, POP7 and RPP25 form the 'finger' subcomplex, POP5, RPP14, RPP40 and homodimeric RPP30 form the 'palm' subcomplex, and RPP21, POP4 and RPP38 form the 'wrist' subcomplex. All subunits of the RNase P complex interact with the catalytic RNA. Several subunits of RNase P are also part of the RNase MRP complex. RNase MRP consists of a catalytic RNA moiety and about 8 protein subunits; POP1, POP7, RPP25, RPP30, RPP38, RPP40 and possibly also POP4 and POP5.</text>
</comment>
<comment type="subcellular location">
    <subcellularLocation>
        <location evidence="1">Nucleus</location>
        <location evidence="1">Nucleolus</location>
    </subcellularLocation>
</comment>
<comment type="similarity">
    <text evidence="2">Belongs to the eukaryotic/archaeal RNase P protein component 1 family.</text>
</comment>
<gene>
    <name type="primary">Pop4</name>
    <name type="synonym">Rpp29</name>
</gene>
<protein>
    <recommendedName>
        <fullName>Ribonuclease P protein subunit p29</fullName>
    </recommendedName>
</protein>
<dbReference type="EMBL" id="AK002855">
    <property type="protein sequence ID" value="BAB22410.1"/>
    <property type="molecule type" value="mRNA"/>
</dbReference>
<dbReference type="EMBL" id="AK003293">
    <property type="protein sequence ID" value="BAB22696.1"/>
    <property type="molecule type" value="mRNA"/>
</dbReference>
<dbReference type="EMBL" id="AK150459">
    <property type="protein sequence ID" value="BAE29579.1"/>
    <property type="molecule type" value="mRNA"/>
</dbReference>
<dbReference type="EMBL" id="AK152948">
    <property type="protein sequence ID" value="BAE31617.1"/>
    <property type="molecule type" value="mRNA"/>
</dbReference>
<dbReference type="EMBL" id="BC011465">
    <property type="protein sequence ID" value="AAH11465.1"/>
    <property type="molecule type" value="mRNA"/>
</dbReference>
<dbReference type="CCDS" id="CCDS39915.1"/>
<dbReference type="RefSeq" id="NP_079666.1">
    <property type="nucleotide sequence ID" value="NM_025390.5"/>
</dbReference>
<dbReference type="SMR" id="Q9CR08"/>
<dbReference type="FunCoup" id="Q9CR08">
    <property type="interactions" value="1653"/>
</dbReference>
<dbReference type="STRING" id="10090.ENSMUSP00000032585"/>
<dbReference type="iPTMnet" id="Q9CR08"/>
<dbReference type="PhosphoSitePlus" id="Q9CR08"/>
<dbReference type="PaxDb" id="10090-ENSMUSP00000032585"/>
<dbReference type="PeptideAtlas" id="Q9CR08"/>
<dbReference type="ProteomicsDB" id="262704"/>
<dbReference type="Pumba" id="Q9CR08"/>
<dbReference type="Antibodypedia" id="15541">
    <property type="antibodies" value="153 antibodies from 26 providers"/>
</dbReference>
<dbReference type="DNASU" id="66161"/>
<dbReference type="Ensembl" id="ENSMUST00000032585.8">
    <property type="protein sequence ID" value="ENSMUSP00000032585.7"/>
    <property type="gene ID" value="ENSMUSG00000030423.8"/>
</dbReference>
<dbReference type="GeneID" id="66161"/>
<dbReference type="KEGG" id="mmu:66161"/>
<dbReference type="UCSC" id="uc009gkv.1">
    <property type="organism name" value="mouse"/>
</dbReference>
<dbReference type="AGR" id="MGI:1913411"/>
<dbReference type="CTD" id="10775"/>
<dbReference type="MGI" id="MGI:1913411">
    <property type="gene designation" value="Pop4"/>
</dbReference>
<dbReference type="VEuPathDB" id="HostDB:ENSMUSG00000030423"/>
<dbReference type="eggNOG" id="KOG4046">
    <property type="taxonomic scope" value="Eukaryota"/>
</dbReference>
<dbReference type="GeneTree" id="ENSGT00390000010067"/>
<dbReference type="HOGENOM" id="CLU_078577_2_1_1"/>
<dbReference type="InParanoid" id="Q9CR08"/>
<dbReference type="OMA" id="IPKSECV"/>
<dbReference type="OrthoDB" id="124041at2759"/>
<dbReference type="PhylomeDB" id="Q9CR08"/>
<dbReference type="TreeFam" id="TF313883"/>
<dbReference type="BioGRID-ORCS" id="66161">
    <property type="hits" value="27 hits in 76 CRISPR screens"/>
</dbReference>
<dbReference type="PRO" id="PR:Q9CR08"/>
<dbReference type="Proteomes" id="UP000000589">
    <property type="component" value="Chromosome 7"/>
</dbReference>
<dbReference type="RNAct" id="Q9CR08">
    <property type="molecule type" value="protein"/>
</dbReference>
<dbReference type="Bgee" id="ENSMUSG00000030423">
    <property type="expression patterns" value="Expressed in floor plate of midbrain and 235 other cell types or tissues"/>
</dbReference>
<dbReference type="ExpressionAtlas" id="Q9CR08">
    <property type="expression patterns" value="baseline and differential"/>
</dbReference>
<dbReference type="GO" id="GO:0030681">
    <property type="term" value="C:multimeric ribonuclease P complex"/>
    <property type="evidence" value="ECO:0000250"/>
    <property type="project" value="UniProtKB"/>
</dbReference>
<dbReference type="GO" id="GO:0005730">
    <property type="term" value="C:nucleolus"/>
    <property type="evidence" value="ECO:0007669"/>
    <property type="project" value="UniProtKB-SubCell"/>
</dbReference>
<dbReference type="GO" id="GO:0005654">
    <property type="term" value="C:nucleoplasm"/>
    <property type="evidence" value="ECO:0007669"/>
    <property type="project" value="Ensembl"/>
</dbReference>
<dbReference type="GO" id="GO:0000172">
    <property type="term" value="C:ribonuclease MRP complex"/>
    <property type="evidence" value="ECO:0007669"/>
    <property type="project" value="InterPro"/>
</dbReference>
<dbReference type="GO" id="GO:0004526">
    <property type="term" value="F:ribonuclease P activity"/>
    <property type="evidence" value="ECO:0007669"/>
    <property type="project" value="UniProtKB-EC"/>
</dbReference>
<dbReference type="GO" id="GO:0033204">
    <property type="term" value="F:ribonuclease P RNA binding"/>
    <property type="evidence" value="ECO:0000250"/>
    <property type="project" value="UniProtKB"/>
</dbReference>
<dbReference type="GO" id="GO:0001682">
    <property type="term" value="P:tRNA 5'-leader removal"/>
    <property type="evidence" value="ECO:0000250"/>
    <property type="project" value="UniProtKB"/>
</dbReference>
<dbReference type="FunFam" id="2.30.30.210:FF:000001">
    <property type="entry name" value="Ribonuclease P protein subunit p29"/>
    <property type="match status" value="1"/>
</dbReference>
<dbReference type="Gene3D" id="2.30.30.210">
    <property type="entry name" value="Ribonuclease P/MRP, subunit p29"/>
    <property type="match status" value="1"/>
</dbReference>
<dbReference type="InterPro" id="IPR016848">
    <property type="entry name" value="RNase_P/MRP_Rpp29-subunit"/>
</dbReference>
<dbReference type="InterPro" id="IPR036980">
    <property type="entry name" value="RNase_P/MRP_Rpp29_sf"/>
</dbReference>
<dbReference type="InterPro" id="IPR023534">
    <property type="entry name" value="Rof/RNase_P-like"/>
</dbReference>
<dbReference type="InterPro" id="IPR002730">
    <property type="entry name" value="Rpp29/RNP1"/>
</dbReference>
<dbReference type="PANTHER" id="PTHR13348:SF0">
    <property type="entry name" value="RIBONUCLEASE P PROTEIN SUBUNIT P29"/>
    <property type="match status" value="1"/>
</dbReference>
<dbReference type="PANTHER" id="PTHR13348">
    <property type="entry name" value="RIBONUCLEASE P SUBUNIT P29"/>
    <property type="match status" value="1"/>
</dbReference>
<dbReference type="Pfam" id="PF01868">
    <property type="entry name" value="RNase_P-MRP_p29"/>
    <property type="match status" value="1"/>
</dbReference>
<dbReference type="PIRSF" id="PIRSF027081">
    <property type="entry name" value="RNase_P/MRP_p29_subunit"/>
    <property type="match status" value="1"/>
</dbReference>
<dbReference type="SMART" id="SM00538">
    <property type="entry name" value="POP4"/>
    <property type="match status" value="1"/>
</dbReference>
<dbReference type="SUPFAM" id="SSF101744">
    <property type="entry name" value="Rof/RNase P subunit-like"/>
    <property type="match status" value="1"/>
</dbReference>
<feature type="chain" id="PRO_0000128419" description="Ribonuclease P protein subunit p29">
    <location>
        <begin position="1"/>
        <end position="221"/>
    </location>
</feature>
<feature type="modified residue" description="Phosphoserine" evidence="1">
    <location>
        <position position="10"/>
    </location>
</feature>
<accession>Q9CR08</accession>
<accession>Q3U6V7</accession>
<sequence length="221" mass="25637">MKAAIYHAFSHKEAKDHDVQELGSQRAEAFVRAFLKQSIPHMSQEDCESHLQRKAVILEYFTRLKPRPRPKKKSKGLSAKQRRDMRLFDIKPEQQRYSLFLPLHELWKQYIRDLCNGLKPDTQPQMIQAKLLKADLHGAIISVTKSKCPSYVGVTGILLQETKHVFKIITREDHLKVIPKLNCVFTIEIDDFISYIYGSKFQLRASERSAKKFKAKGSIDL</sequence>
<organism>
    <name type="scientific">Mus musculus</name>
    <name type="common">Mouse</name>
    <dbReference type="NCBI Taxonomy" id="10090"/>
    <lineage>
        <taxon>Eukaryota</taxon>
        <taxon>Metazoa</taxon>
        <taxon>Chordata</taxon>
        <taxon>Craniata</taxon>
        <taxon>Vertebrata</taxon>
        <taxon>Euteleostomi</taxon>
        <taxon>Mammalia</taxon>
        <taxon>Eutheria</taxon>
        <taxon>Euarchontoglires</taxon>
        <taxon>Glires</taxon>
        <taxon>Rodentia</taxon>
        <taxon>Myomorpha</taxon>
        <taxon>Muroidea</taxon>
        <taxon>Muridae</taxon>
        <taxon>Murinae</taxon>
        <taxon>Mus</taxon>
        <taxon>Mus</taxon>
    </lineage>
</organism>